<keyword id="KW-0966">Cell projection</keyword>
<keyword id="KW-0970">Cilium biogenesis/degradation</keyword>
<keyword id="KW-0175">Coiled coil</keyword>
<keyword id="KW-0963">Cytoplasm</keyword>
<keyword id="KW-0206">Cytoskeleton</keyword>
<keyword id="KW-0221">Differentiation</keyword>
<keyword id="KW-1185">Reference proteome</keyword>
<dbReference type="EMBL" id="AE013599">
    <property type="protein sequence ID" value="AAF58897.2"/>
    <property type="molecule type" value="Genomic_DNA"/>
</dbReference>
<dbReference type="RefSeq" id="NP_610519.2">
    <property type="nucleotide sequence ID" value="NM_136675.3"/>
</dbReference>
<dbReference type="SMR" id="A1Z7Z9"/>
<dbReference type="BioGRID" id="61839">
    <property type="interactions" value="1"/>
</dbReference>
<dbReference type="FunCoup" id="A1Z7Z9">
    <property type="interactions" value="38"/>
</dbReference>
<dbReference type="IntAct" id="A1Z7Z9">
    <property type="interactions" value="9"/>
</dbReference>
<dbReference type="STRING" id="7227.FBpp0301614"/>
<dbReference type="GlyGen" id="A1Z7Z9">
    <property type="glycosylation" value="1 site"/>
</dbReference>
<dbReference type="PaxDb" id="7227-FBpp0301614"/>
<dbReference type="EnsemblMetazoa" id="FBtr0309879">
    <property type="protein sequence ID" value="FBpp0301613"/>
    <property type="gene ID" value="FBgn0033447"/>
</dbReference>
<dbReference type="GeneID" id="36010"/>
<dbReference type="KEGG" id="dme:Dmel_CG1625"/>
<dbReference type="UCSC" id="CG1625-RA">
    <property type="organism name" value="d. melanogaster"/>
</dbReference>
<dbReference type="AGR" id="FB:FBgn0033447"/>
<dbReference type="CTD" id="36010"/>
<dbReference type="FlyBase" id="FBgn0033447">
    <property type="gene designation" value="dila"/>
</dbReference>
<dbReference type="VEuPathDB" id="VectorBase:FBgn0033447"/>
<dbReference type="eggNOG" id="ENOG502RZME">
    <property type="taxonomic scope" value="Eukaryota"/>
</dbReference>
<dbReference type="GeneTree" id="ENSGT00390000001758"/>
<dbReference type="InParanoid" id="A1Z7Z9"/>
<dbReference type="OrthoDB" id="197735at2759"/>
<dbReference type="PhylomeDB" id="A1Z7Z9"/>
<dbReference type="SignaLink" id="A1Z7Z9"/>
<dbReference type="BioGRID-ORCS" id="36010">
    <property type="hits" value="0 hits in 1 CRISPR screen"/>
</dbReference>
<dbReference type="GenomeRNAi" id="36010"/>
<dbReference type="PRO" id="PR:A1Z7Z9"/>
<dbReference type="Proteomes" id="UP000000803">
    <property type="component" value="Chromosome 2R"/>
</dbReference>
<dbReference type="Bgee" id="FBgn0033447">
    <property type="expression patterns" value="Expressed in sensory mother cell (Drosophila) and 23 other cell types or tissues"/>
</dbReference>
<dbReference type="ExpressionAtlas" id="A1Z7Z9">
    <property type="expression patterns" value="baseline and differential"/>
</dbReference>
<dbReference type="GO" id="GO:0034451">
    <property type="term" value="C:centriolar satellite"/>
    <property type="evidence" value="ECO:0000318"/>
    <property type="project" value="GO_Central"/>
</dbReference>
<dbReference type="GO" id="GO:0005814">
    <property type="term" value="C:centriole"/>
    <property type="evidence" value="ECO:0007669"/>
    <property type="project" value="UniProtKB-SubCell"/>
</dbReference>
<dbReference type="GO" id="GO:0036064">
    <property type="term" value="C:ciliary basal body"/>
    <property type="evidence" value="ECO:0000314"/>
    <property type="project" value="FlyBase"/>
</dbReference>
<dbReference type="GO" id="GO:0061822">
    <property type="term" value="C:ciliary cap"/>
    <property type="evidence" value="ECO:0000314"/>
    <property type="project" value="FlyBase"/>
</dbReference>
<dbReference type="GO" id="GO:0035869">
    <property type="term" value="C:ciliary transition zone"/>
    <property type="evidence" value="ECO:0000314"/>
    <property type="project" value="FlyBase"/>
</dbReference>
<dbReference type="GO" id="GO:0005737">
    <property type="term" value="C:cytoplasm"/>
    <property type="evidence" value="ECO:0007669"/>
    <property type="project" value="UniProtKB-KW"/>
</dbReference>
<dbReference type="GO" id="GO:0000242">
    <property type="term" value="C:pericentriolar material"/>
    <property type="evidence" value="ECO:0000314"/>
    <property type="project" value="FlyBase"/>
</dbReference>
<dbReference type="GO" id="GO:0008344">
    <property type="term" value="P:adult locomotory behavior"/>
    <property type="evidence" value="ECO:0000315"/>
    <property type="project" value="FlyBase"/>
</dbReference>
<dbReference type="GO" id="GO:0035082">
    <property type="term" value="P:axoneme assembly"/>
    <property type="evidence" value="ECO:0000315"/>
    <property type="project" value="FlyBase"/>
</dbReference>
<dbReference type="GO" id="GO:0097711">
    <property type="term" value="P:ciliary basal body-plasma membrane docking"/>
    <property type="evidence" value="ECO:0000316"/>
    <property type="project" value="FlyBase"/>
</dbReference>
<dbReference type="GO" id="GO:1905349">
    <property type="term" value="P:ciliary transition zone assembly"/>
    <property type="evidence" value="ECO:0000316"/>
    <property type="project" value="FlyBase"/>
</dbReference>
<dbReference type="GO" id="GO:0060271">
    <property type="term" value="P:cilium assembly"/>
    <property type="evidence" value="ECO:0000315"/>
    <property type="project" value="FlyBase"/>
</dbReference>
<dbReference type="GO" id="GO:0042073">
    <property type="term" value="P:intraciliary transport"/>
    <property type="evidence" value="ECO:0000315"/>
    <property type="project" value="FlyBase"/>
</dbReference>
<dbReference type="GO" id="GO:0035735">
    <property type="term" value="P:intraciliary transport involved in cilium assembly"/>
    <property type="evidence" value="ECO:0007669"/>
    <property type="project" value="InterPro"/>
</dbReference>
<dbReference type="GO" id="GO:1905515">
    <property type="term" value="P:non-motile cilium assembly"/>
    <property type="evidence" value="ECO:0000316"/>
    <property type="project" value="FlyBase"/>
</dbReference>
<dbReference type="GO" id="GO:0048935">
    <property type="term" value="P:peripheral nervous system neuron development"/>
    <property type="evidence" value="ECO:0000315"/>
    <property type="project" value="FlyBase"/>
</dbReference>
<dbReference type="GO" id="GO:1904491">
    <property type="term" value="P:protein localization to ciliary transition zone"/>
    <property type="evidence" value="ECO:0000316"/>
    <property type="project" value="FlyBase"/>
</dbReference>
<dbReference type="GO" id="GO:0010824">
    <property type="term" value="P:regulation of centrosome duplication"/>
    <property type="evidence" value="ECO:0000318"/>
    <property type="project" value="GO_Central"/>
</dbReference>
<dbReference type="GO" id="GO:0007288">
    <property type="term" value="P:sperm axoneme assembly"/>
    <property type="evidence" value="ECO:0000316"/>
    <property type="project" value="FlyBase"/>
</dbReference>
<dbReference type="GO" id="GO:0007283">
    <property type="term" value="P:spermatogenesis"/>
    <property type="evidence" value="ECO:0000315"/>
    <property type="project" value="FlyBase"/>
</dbReference>
<dbReference type="InterPro" id="IPR030465">
    <property type="entry name" value="CEP131"/>
</dbReference>
<dbReference type="PANTHER" id="PTHR31540">
    <property type="entry name" value="CENTROSOMAL PROTEIN OF 131 KDA"/>
    <property type="match status" value="1"/>
</dbReference>
<dbReference type="PANTHER" id="PTHR31540:SF1">
    <property type="entry name" value="CENTROSOMAL PROTEIN OF 131 KDA"/>
    <property type="match status" value="1"/>
</dbReference>
<feature type="chain" id="PRO_0000429320" description="Centrosomal protein of 131 kDa">
    <location>
        <begin position="1"/>
        <end position="1134"/>
    </location>
</feature>
<feature type="region of interest" description="Disordered" evidence="2">
    <location>
        <begin position="111"/>
        <end position="131"/>
    </location>
</feature>
<feature type="region of interest" description="Disordered" evidence="2">
    <location>
        <begin position="168"/>
        <end position="208"/>
    </location>
</feature>
<feature type="region of interest" description="Disordered" evidence="2">
    <location>
        <begin position="286"/>
        <end position="306"/>
    </location>
</feature>
<feature type="region of interest" description="Disordered" evidence="2">
    <location>
        <begin position="425"/>
        <end position="455"/>
    </location>
</feature>
<feature type="region of interest" description="Disordered" evidence="2">
    <location>
        <begin position="492"/>
        <end position="528"/>
    </location>
</feature>
<feature type="coiled-coil region" evidence="1">
    <location>
        <begin position="732"/>
        <end position="1131"/>
    </location>
</feature>
<feature type="compositionally biased region" description="Basic and acidic residues" evidence="2">
    <location>
        <begin position="180"/>
        <end position="196"/>
    </location>
</feature>
<feature type="compositionally biased region" description="Basic and acidic residues" evidence="2">
    <location>
        <begin position="494"/>
        <end position="504"/>
    </location>
</feature>
<feature type="compositionally biased region" description="Polar residues" evidence="2">
    <location>
        <begin position="513"/>
        <end position="522"/>
    </location>
</feature>
<name>CP131_DROME</name>
<reference key="1">
    <citation type="journal article" date="2000" name="Science">
        <title>The genome sequence of Drosophila melanogaster.</title>
        <authorList>
            <person name="Adams M.D."/>
            <person name="Celniker S.E."/>
            <person name="Holt R.A."/>
            <person name="Evans C.A."/>
            <person name="Gocayne J.D."/>
            <person name="Amanatides P.G."/>
            <person name="Scherer S.E."/>
            <person name="Li P.W."/>
            <person name="Hoskins R.A."/>
            <person name="Galle R.F."/>
            <person name="George R.A."/>
            <person name="Lewis S.E."/>
            <person name="Richards S."/>
            <person name="Ashburner M."/>
            <person name="Henderson S.N."/>
            <person name="Sutton G.G."/>
            <person name="Wortman J.R."/>
            <person name="Yandell M.D."/>
            <person name="Zhang Q."/>
            <person name="Chen L.X."/>
            <person name="Brandon R.C."/>
            <person name="Rogers Y.-H.C."/>
            <person name="Blazej R.G."/>
            <person name="Champe M."/>
            <person name="Pfeiffer B.D."/>
            <person name="Wan K.H."/>
            <person name="Doyle C."/>
            <person name="Baxter E.G."/>
            <person name="Helt G."/>
            <person name="Nelson C.R."/>
            <person name="Miklos G.L.G."/>
            <person name="Abril J.F."/>
            <person name="Agbayani A."/>
            <person name="An H.-J."/>
            <person name="Andrews-Pfannkoch C."/>
            <person name="Baldwin D."/>
            <person name="Ballew R.M."/>
            <person name="Basu A."/>
            <person name="Baxendale J."/>
            <person name="Bayraktaroglu L."/>
            <person name="Beasley E.M."/>
            <person name="Beeson K.Y."/>
            <person name="Benos P.V."/>
            <person name="Berman B.P."/>
            <person name="Bhandari D."/>
            <person name="Bolshakov S."/>
            <person name="Borkova D."/>
            <person name="Botchan M.R."/>
            <person name="Bouck J."/>
            <person name="Brokstein P."/>
            <person name="Brottier P."/>
            <person name="Burtis K.C."/>
            <person name="Busam D.A."/>
            <person name="Butler H."/>
            <person name="Cadieu E."/>
            <person name="Center A."/>
            <person name="Chandra I."/>
            <person name="Cherry J.M."/>
            <person name="Cawley S."/>
            <person name="Dahlke C."/>
            <person name="Davenport L.B."/>
            <person name="Davies P."/>
            <person name="de Pablos B."/>
            <person name="Delcher A."/>
            <person name="Deng Z."/>
            <person name="Mays A.D."/>
            <person name="Dew I."/>
            <person name="Dietz S.M."/>
            <person name="Dodson K."/>
            <person name="Doup L.E."/>
            <person name="Downes M."/>
            <person name="Dugan-Rocha S."/>
            <person name="Dunkov B.C."/>
            <person name="Dunn P."/>
            <person name="Durbin K.J."/>
            <person name="Evangelista C.C."/>
            <person name="Ferraz C."/>
            <person name="Ferriera S."/>
            <person name="Fleischmann W."/>
            <person name="Fosler C."/>
            <person name="Gabrielian A.E."/>
            <person name="Garg N.S."/>
            <person name="Gelbart W.M."/>
            <person name="Glasser K."/>
            <person name="Glodek A."/>
            <person name="Gong F."/>
            <person name="Gorrell J.H."/>
            <person name="Gu Z."/>
            <person name="Guan P."/>
            <person name="Harris M."/>
            <person name="Harris N.L."/>
            <person name="Harvey D.A."/>
            <person name="Heiman T.J."/>
            <person name="Hernandez J.R."/>
            <person name="Houck J."/>
            <person name="Hostin D."/>
            <person name="Houston K.A."/>
            <person name="Howland T.J."/>
            <person name="Wei M.-H."/>
            <person name="Ibegwam C."/>
            <person name="Jalali M."/>
            <person name="Kalush F."/>
            <person name="Karpen G.H."/>
            <person name="Ke Z."/>
            <person name="Kennison J.A."/>
            <person name="Ketchum K.A."/>
            <person name="Kimmel B.E."/>
            <person name="Kodira C.D."/>
            <person name="Kraft C.L."/>
            <person name="Kravitz S."/>
            <person name="Kulp D."/>
            <person name="Lai Z."/>
            <person name="Lasko P."/>
            <person name="Lei Y."/>
            <person name="Levitsky A.A."/>
            <person name="Li J.H."/>
            <person name="Li Z."/>
            <person name="Liang Y."/>
            <person name="Lin X."/>
            <person name="Liu X."/>
            <person name="Mattei B."/>
            <person name="McIntosh T.C."/>
            <person name="McLeod M.P."/>
            <person name="McPherson D."/>
            <person name="Merkulov G."/>
            <person name="Milshina N.V."/>
            <person name="Mobarry C."/>
            <person name="Morris J."/>
            <person name="Moshrefi A."/>
            <person name="Mount S.M."/>
            <person name="Moy M."/>
            <person name="Murphy B."/>
            <person name="Murphy L."/>
            <person name="Muzny D.M."/>
            <person name="Nelson D.L."/>
            <person name="Nelson D.R."/>
            <person name="Nelson K.A."/>
            <person name="Nixon K."/>
            <person name="Nusskern D.R."/>
            <person name="Pacleb J.M."/>
            <person name="Palazzolo M."/>
            <person name="Pittman G.S."/>
            <person name="Pan S."/>
            <person name="Pollard J."/>
            <person name="Puri V."/>
            <person name="Reese M.G."/>
            <person name="Reinert K."/>
            <person name="Remington K."/>
            <person name="Saunders R.D.C."/>
            <person name="Scheeler F."/>
            <person name="Shen H."/>
            <person name="Shue B.C."/>
            <person name="Siden-Kiamos I."/>
            <person name="Simpson M."/>
            <person name="Skupski M.P."/>
            <person name="Smith T.J."/>
            <person name="Spier E."/>
            <person name="Spradling A.C."/>
            <person name="Stapleton M."/>
            <person name="Strong R."/>
            <person name="Sun E."/>
            <person name="Svirskas R."/>
            <person name="Tector C."/>
            <person name="Turner R."/>
            <person name="Venter E."/>
            <person name="Wang A.H."/>
            <person name="Wang X."/>
            <person name="Wang Z.-Y."/>
            <person name="Wassarman D.A."/>
            <person name="Weinstock G.M."/>
            <person name="Weissenbach J."/>
            <person name="Williams S.M."/>
            <person name="Woodage T."/>
            <person name="Worley K.C."/>
            <person name="Wu D."/>
            <person name="Yang S."/>
            <person name="Yao Q.A."/>
            <person name="Ye J."/>
            <person name="Yeh R.-F."/>
            <person name="Zaveri J.S."/>
            <person name="Zhan M."/>
            <person name="Zhang G."/>
            <person name="Zhao Q."/>
            <person name="Zheng L."/>
            <person name="Zheng X.H."/>
            <person name="Zhong F.N."/>
            <person name="Zhong W."/>
            <person name="Zhou X."/>
            <person name="Zhu S.C."/>
            <person name="Zhu X."/>
            <person name="Smith H.O."/>
            <person name="Gibbs R.A."/>
            <person name="Myers E.W."/>
            <person name="Rubin G.M."/>
            <person name="Venter J.C."/>
        </authorList>
    </citation>
    <scope>NUCLEOTIDE SEQUENCE [LARGE SCALE GENOMIC DNA]</scope>
    <source>
        <strain>Berkeley</strain>
    </source>
</reference>
<reference key="2">
    <citation type="journal article" date="2002" name="Genome Biol.">
        <title>Annotation of the Drosophila melanogaster euchromatic genome: a systematic review.</title>
        <authorList>
            <person name="Misra S."/>
            <person name="Crosby M.A."/>
            <person name="Mungall C.J."/>
            <person name="Matthews B.B."/>
            <person name="Campbell K.S."/>
            <person name="Hradecky P."/>
            <person name="Huang Y."/>
            <person name="Kaminker J.S."/>
            <person name="Millburn G.H."/>
            <person name="Prochnik S.E."/>
            <person name="Smith C.D."/>
            <person name="Tupy J.L."/>
            <person name="Whitfield E.J."/>
            <person name="Bayraktaroglu L."/>
            <person name="Berman B.P."/>
            <person name="Bettencourt B.R."/>
            <person name="Celniker S.E."/>
            <person name="de Grey A.D.N.J."/>
            <person name="Drysdale R.A."/>
            <person name="Harris N.L."/>
            <person name="Richter J."/>
            <person name="Russo S."/>
            <person name="Schroeder A.J."/>
            <person name="Shu S.Q."/>
            <person name="Stapleton M."/>
            <person name="Yamada C."/>
            <person name="Ashburner M."/>
            <person name="Gelbart W.M."/>
            <person name="Rubin G.M."/>
            <person name="Lewis S.E."/>
        </authorList>
    </citation>
    <scope>GENOME REANNOTATION</scope>
    <source>
        <strain>Berkeley</strain>
    </source>
</reference>
<reference key="3">
    <citation type="journal article" date="2011" name="J. Cell Sci.">
        <title>Dilatory is a Drosophila protein related to AZI1 (CEP131) that is located at the ciliary base and required for cilium formation.</title>
        <authorList>
            <person name="Ma L."/>
            <person name="Jarman A.P."/>
        </authorList>
    </citation>
    <scope>FUNCTION</scope>
    <scope>SUBCELLULAR LOCATION</scope>
    <scope>DISRUPTION PHENOTYPE</scope>
    <scope>TISSUE SPECIFICITY</scope>
    <scope>DEVELOPMENTAL STAGE</scope>
</reference>
<reference key="4">
    <citation type="journal article" date="2016" name="J. Cell Biol.">
        <title>Transition zone assembly and its contribution to axoneme formation in Drosophila male germ cells.</title>
        <authorList>
            <person name="Vieillard J."/>
            <person name="Paschaki M."/>
            <person name="Duteyrat J.L."/>
            <person name="Augiere C."/>
            <person name="Cortier E."/>
            <person name="Lapart J.A."/>
            <person name="Thomas J."/>
            <person name="Durand B."/>
        </authorList>
    </citation>
    <scope>SUBCELLULAR LOCATION</scope>
    <scope>TISSUE SPECIFICITY</scope>
</reference>
<proteinExistence type="evidence at transcript level"/>
<organism>
    <name type="scientific">Drosophila melanogaster</name>
    <name type="common">Fruit fly</name>
    <dbReference type="NCBI Taxonomy" id="7227"/>
    <lineage>
        <taxon>Eukaryota</taxon>
        <taxon>Metazoa</taxon>
        <taxon>Ecdysozoa</taxon>
        <taxon>Arthropoda</taxon>
        <taxon>Hexapoda</taxon>
        <taxon>Insecta</taxon>
        <taxon>Pterygota</taxon>
        <taxon>Neoptera</taxon>
        <taxon>Endopterygota</taxon>
        <taxon>Diptera</taxon>
        <taxon>Brachycera</taxon>
        <taxon>Muscomorpha</taxon>
        <taxon>Ephydroidea</taxon>
        <taxon>Drosophilidae</taxon>
        <taxon>Drosophila</taxon>
        <taxon>Sophophora</taxon>
    </lineage>
</organism>
<gene>
    <name evidence="5 8" type="primary">dila</name>
    <name evidence="6" type="synonym">azi1</name>
    <name evidence="5" type="synonym">cep131</name>
    <name type="ORF">Dmel_CG1625</name>
</gene>
<comment type="function">
    <text evidence="3 4">Cilium-specific protein with a role in cilium/flagellum formation (PubMed:21750193, PubMed:27646273). May be involved in transport of components into the growing cilium (PubMed:21750193). In germ cells and sensory neurons, plays a role with Cby in the building of the transition zone necessary for the formation of the ciliary cap and for the correct elongation of the axoneme (PubMed:27646273).</text>
</comment>
<comment type="subcellular location">
    <subcellularLocation>
        <location evidence="3">Cytoplasm</location>
        <location evidence="3">Cytoskeleton</location>
        <location evidence="3">Microtubule organizing center</location>
        <location evidence="3">Centrosome</location>
    </subcellularLocation>
    <subcellularLocation>
        <location evidence="3 4">Cytoplasm</location>
        <location evidence="3 4">Cytoskeleton</location>
        <location evidence="3 4">Cilium basal body</location>
    </subcellularLocation>
    <subcellularLocation>
        <location evidence="4">Cytoplasm</location>
        <location evidence="4">Cytoskeleton</location>
        <location evidence="4">Microtubule organizing center</location>
        <location evidence="4">Centrosome</location>
        <location evidence="4">Centriole</location>
    </subcellularLocation>
    <text evidence="3 4">Co-localizes with the pericentriolar material (PCM) protein cp190 at centrosomes in undifferentiated sensory neurons (PubMed:21750193, PubMed:27646273). Localizes to the ciliary base, including the basal body and transition zone in sensory neurons and germ cells (PubMed:21750193, PubMed:27646273).</text>
</comment>
<comment type="tissue specificity">
    <text evidence="3">Expressed in chordotonal (Ch) neuronal precursors. Expressed in ciliated cells, like sensory neurons and spermatids.</text>
</comment>
<comment type="developmental stage">
    <text evidence="3">Expressed in developing and differentiating ciliated sensory neurons of both the chordotonal (Ch) mechanosensory neurons and external sensory (ES) cells.</text>
</comment>
<comment type="disruption phenotype">
    <text evidence="3 4">Displays reduced climbing ability and die very soon after eclosion (PubMed:21750193). Loss of protein expression leads to truncated sensory cilia formation and impaired intraflagellar transport processes (PubMed:21750193). Simultaneous knockout of Cby and dila results in lack of motor coordination and absence of cilia in chordotonal neurons where centrioles fail to build a transition zone and Cep290 and Mks1 are mis-localized. Males are sterile: aberrant microtubule extensions, lack of ciliary cap and mislocalization of Mks1 and B9d1 to the basal body result in failure of axoneme formation and lack of mature sperm; sperm cysts fail to elongate whereas the overall size of the testes is not reduced (PubMed:27646273).</text>
</comment>
<comment type="similarity">
    <text evidence="7">Belongs to the CEP131 family.</text>
</comment>
<sequence>MDLCLKGSQINLATRQKTKPKYTSRSLTTLHNPCPHFRPRSANFLQQRSRSSPFLGRPQSADPKFGRRLSNYFVEKELRNGGKRQVSSNDLLKSLLEEPIKRSWLCRSTCNSSESDYSLHKRTPDSSEEGEQFLVNMPVGEKVKSYSSYSGNQGLSNGALLQRTAKPDLPGRVSFSKPNMHADLDSSDCDNDKQEVRPSISAPGPLTLPSFLSKVEQADPVGQKKSVHFGSTAAEGEVLAETYEYPKCPSENCTCSTRSSSTTSTNEASASDVKCACDAPSCRFMESSKQVEPTSPTPTLPKAPSSELDVIREYKQAVEGVQVVKNHLGTDTLNNIEILPNYLDKYASPTKEKQNNLSETKNMATNSSAVNNGSVVYRPVGNPRNFGAENNFLPAVQDDRRSFANGSSDGVINNYLKVASTPPFVGKKKENVKPASADPIARSSKSKVTKSTINPAPLGKMKKAISVGSLREERKLSEYNLDKVDSWMSMQDQKQYDGKHKPGLEDLDEAQDNDTASQLSLKSNEDSRDSTYDEIVSVIKEIEEDKKRDNFSEGIPSELNLNLDSRCETADTVTVSEGKVPESGDKYKDILAYLNNVESSCDKTLMETRRSIPDSNRSEVEFVVEPDVTDEVPKLSELLMLPNHQLARRVIALSLRANELANAIHMSKEHVFQLRGEKQKSLRAEKSTAAAKLRDQKKHYEEVVTRHQGFIEQLLKDKGSLCEKVAALTRRLESQNQAWEHRLETELARTKETTMAGEKIRRERWVRENTKKIKELTVKGLEAEINKMNCDHQREVTELKRTHQMQLLDALEEARTKHEQIETSIRESCAQDREAIIEKERTAIRERFERQLEEEQRTQAEQRQKLTEEFAAERDRLQSELRQRENEHQARRQEALREQEQELEQAKFEMQERMAKQEEKYQNRVNTIEQQYQADFELWKTEHENKTKLAQAEKENAIRQHYRAERDRQLDELVVRMEADALQHKEEHELKMNRLKEKYEKDLVLAESVEKSLREKYAETRGKLAEADAQVRNSQAEVKQLQLELSHSKKMCGDIIMERDRLRDNLNADIQSELGVLNERHKQEMDQLQKRVHQTIQRQEETIEILKGDNDALRQQCLKLNAVIRQQRKDYCVK</sequence>
<accession>A1Z7Z9</accession>
<evidence type="ECO:0000255" key="1"/>
<evidence type="ECO:0000256" key="2">
    <source>
        <dbReference type="SAM" id="MobiDB-lite"/>
    </source>
</evidence>
<evidence type="ECO:0000269" key="3">
    <source>
    </source>
</evidence>
<evidence type="ECO:0000269" key="4">
    <source>
    </source>
</evidence>
<evidence type="ECO:0000303" key="5">
    <source>
    </source>
</evidence>
<evidence type="ECO:0000303" key="6">
    <source>
    </source>
</evidence>
<evidence type="ECO:0000305" key="7"/>
<evidence type="ECO:0000312" key="8">
    <source>
        <dbReference type="FlyBase" id="FBgn0033447"/>
    </source>
</evidence>
<protein>
    <recommendedName>
        <fullName>Centrosomal protein of 131 kDa</fullName>
    </recommendedName>
    <alternativeName>
        <fullName>5-azacytidine-induced protein 1</fullName>
    </alternativeName>
    <alternativeName>
        <fullName evidence="5 8">Dilatory protein</fullName>
    </alternativeName>
</protein>